<evidence type="ECO:0000255" key="1">
    <source>
        <dbReference type="HAMAP-Rule" id="MF_01062"/>
    </source>
</evidence>
<gene>
    <name type="ordered locus">Shew185_2482</name>
</gene>
<accession>A6WP80</accession>
<feature type="chain" id="PRO_0000316733" description="Putative phosphoenolpyruvate synthase regulatory protein">
    <location>
        <begin position="1"/>
        <end position="270"/>
    </location>
</feature>
<feature type="binding site" evidence="1">
    <location>
        <begin position="150"/>
        <end position="157"/>
    </location>
    <ligand>
        <name>ADP</name>
        <dbReference type="ChEBI" id="CHEBI:456216"/>
    </ligand>
</feature>
<protein>
    <recommendedName>
        <fullName evidence="1">Putative phosphoenolpyruvate synthase regulatory protein</fullName>
        <shortName evidence="1">PEP synthase regulatory protein</shortName>
        <shortName evidence="1">PSRP</shortName>
        <ecNumber evidence="1">2.7.11.33</ecNumber>
        <ecNumber evidence="1">2.7.4.28</ecNumber>
    </recommendedName>
    <alternativeName>
        <fullName evidence="1">Pyruvate, water dikinase regulatory protein</fullName>
    </alternativeName>
</protein>
<organism>
    <name type="scientific">Shewanella baltica (strain OS185)</name>
    <dbReference type="NCBI Taxonomy" id="402882"/>
    <lineage>
        <taxon>Bacteria</taxon>
        <taxon>Pseudomonadati</taxon>
        <taxon>Pseudomonadota</taxon>
        <taxon>Gammaproteobacteria</taxon>
        <taxon>Alteromonadales</taxon>
        <taxon>Shewanellaceae</taxon>
        <taxon>Shewanella</taxon>
    </lineage>
</organism>
<reference key="1">
    <citation type="submission" date="2007-07" db="EMBL/GenBank/DDBJ databases">
        <title>Complete sequence of chromosome of Shewanella baltica OS185.</title>
        <authorList>
            <consortium name="US DOE Joint Genome Institute"/>
            <person name="Copeland A."/>
            <person name="Lucas S."/>
            <person name="Lapidus A."/>
            <person name="Barry K."/>
            <person name="Glavina del Rio T."/>
            <person name="Dalin E."/>
            <person name="Tice H."/>
            <person name="Pitluck S."/>
            <person name="Sims D."/>
            <person name="Brettin T."/>
            <person name="Bruce D."/>
            <person name="Detter J.C."/>
            <person name="Han C."/>
            <person name="Schmutz J."/>
            <person name="Larimer F."/>
            <person name="Land M."/>
            <person name="Hauser L."/>
            <person name="Kyrpides N."/>
            <person name="Mikhailova N."/>
            <person name="Brettar I."/>
            <person name="Rodrigues J."/>
            <person name="Konstantinidis K."/>
            <person name="Tiedje J."/>
            <person name="Richardson P."/>
        </authorList>
    </citation>
    <scope>NUCLEOTIDE SEQUENCE [LARGE SCALE GENOMIC DNA]</scope>
    <source>
        <strain>OS185</strain>
    </source>
</reference>
<comment type="function">
    <text evidence="1">Bifunctional serine/threonine kinase and phosphorylase involved in the regulation of the phosphoenolpyruvate synthase (PEPS) by catalyzing its phosphorylation/dephosphorylation.</text>
</comment>
<comment type="catalytic activity">
    <reaction evidence="1">
        <text>[pyruvate, water dikinase] + ADP = [pyruvate, water dikinase]-phosphate + AMP + H(+)</text>
        <dbReference type="Rhea" id="RHEA:46020"/>
        <dbReference type="Rhea" id="RHEA-COMP:11425"/>
        <dbReference type="Rhea" id="RHEA-COMP:11426"/>
        <dbReference type="ChEBI" id="CHEBI:15378"/>
        <dbReference type="ChEBI" id="CHEBI:43176"/>
        <dbReference type="ChEBI" id="CHEBI:68546"/>
        <dbReference type="ChEBI" id="CHEBI:456215"/>
        <dbReference type="ChEBI" id="CHEBI:456216"/>
        <dbReference type="EC" id="2.7.11.33"/>
    </reaction>
</comment>
<comment type="catalytic activity">
    <reaction evidence="1">
        <text>[pyruvate, water dikinase]-phosphate + phosphate + H(+) = [pyruvate, water dikinase] + diphosphate</text>
        <dbReference type="Rhea" id="RHEA:48580"/>
        <dbReference type="Rhea" id="RHEA-COMP:11425"/>
        <dbReference type="Rhea" id="RHEA-COMP:11426"/>
        <dbReference type="ChEBI" id="CHEBI:15378"/>
        <dbReference type="ChEBI" id="CHEBI:33019"/>
        <dbReference type="ChEBI" id="CHEBI:43176"/>
        <dbReference type="ChEBI" id="CHEBI:43474"/>
        <dbReference type="ChEBI" id="CHEBI:68546"/>
        <dbReference type="EC" id="2.7.4.28"/>
    </reaction>
</comment>
<comment type="similarity">
    <text evidence="1">Belongs to the pyruvate, phosphate/water dikinase regulatory protein family. PSRP subfamily.</text>
</comment>
<keyword id="KW-0418">Kinase</keyword>
<keyword id="KW-0547">Nucleotide-binding</keyword>
<keyword id="KW-0723">Serine/threonine-protein kinase</keyword>
<keyword id="KW-0808">Transferase</keyword>
<name>PSRP_SHEB8</name>
<sequence length="270" mass="30744">MAPKVFYISDGTAITAEVFGHAVLSQFPLEFESLTIPFVETLTKAEQVKRQINDCFITTGERPLVFHSIVKAEIRDIIYSSEGLDYDFLNTFVAPLEQHLGVSASPVLHRTHGKANHGYEARIDAINFAMDNDDGQTMKHMDQADLVLLGVSRCGKTPSSLYLSMQFGIKAANYPFTEDDMDNLKLPDALKRNKKKLFGLTIDPVRLHEIRQSRMENSRYSSLKQCRLEVKEVEMLFKRERIPYIDTTNHSVEEIATKILDVTGLERHMF</sequence>
<proteinExistence type="inferred from homology"/>
<dbReference type="EC" id="2.7.11.33" evidence="1"/>
<dbReference type="EC" id="2.7.4.28" evidence="1"/>
<dbReference type="EMBL" id="CP000753">
    <property type="protein sequence ID" value="ABS08619.1"/>
    <property type="molecule type" value="Genomic_DNA"/>
</dbReference>
<dbReference type="RefSeq" id="WP_006081952.1">
    <property type="nucleotide sequence ID" value="NC_009665.1"/>
</dbReference>
<dbReference type="SMR" id="A6WP80"/>
<dbReference type="KEGG" id="sbm:Shew185_2482"/>
<dbReference type="HOGENOM" id="CLU_046206_1_0_6"/>
<dbReference type="GO" id="GO:0043531">
    <property type="term" value="F:ADP binding"/>
    <property type="evidence" value="ECO:0007669"/>
    <property type="project" value="UniProtKB-UniRule"/>
</dbReference>
<dbReference type="GO" id="GO:0005524">
    <property type="term" value="F:ATP binding"/>
    <property type="evidence" value="ECO:0007669"/>
    <property type="project" value="InterPro"/>
</dbReference>
<dbReference type="GO" id="GO:0016776">
    <property type="term" value="F:phosphotransferase activity, phosphate group as acceptor"/>
    <property type="evidence" value="ECO:0007669"/>
    <property type="project" value="UniProtKB-UniRule"/>
</dbReference>
<dbReference type="GO" id="GO:0004674">
    <property type="term" value="F:protein serine/threonine kinase activity"/>
    <property type="evidence" value="ECO:0007669"/>
    <property type="project" value="UniProtKB-UniRule"/>
</dbReference>
<dbReference type="HAMAP" id="MF_01062">
    <property type="entry name" value="PSRP"/>
    <property type="match status" value="1"/>
</dbReference>
<dbReference type="InterPro" id="IPR005177">
    <property type="entry name" value="Kinase-pyrophosphorylase"/>
</dbReference>
<dbReference type="InterPro" id="IPR026530">
    <property type="entry name" value="PSRP"/>
</dbReference>
<dbReference type="NCBIfam" id="NF003742">
    <property type="entry name" value="PRK05339.1"/>
    <property type="match status" value="1"/>
</dbReference>
<dbReference type="PANTHER" id="PTHR31756">
    <property type="entry name" value="PYRUVATE, PHOSPHATE DIKINASE REGULATORY PROTEIN 1, CHLOROPLASTIC"/>
    <property type="match status" value="1"/>
</dbReference>
<dbReference type="PANTHER" id="PTHR31756:SF3">
    <property type="entry name" value="PYRUVATE, PHOSPHATE DIKINASE REGULATORY PROTEIN 1, CHLOROPLASTIC"/>
    <property type="match status" value="1"/>
</dbReference>
<dbReference type="Pfam" id="PF03618">
    <property type="entry name" value="Kinase-PPPase"/>
    <property type="match status" value="1"/>
</dbReference>